<reference key="1">
    <citation type="journal article" date="2005" name="PLoS Biol.">
        <title>The genomes of Oryza sativa: a history of duplications.</title>
        <authorList>
            <person name="Yu J."/>
            <person name="Wang J."/>
            <person name="Lin W."/>
            <person name="Li S."/>
            <person name="Li H."/>
            <person name="Zhou J."/>
            <person name="Ni P."/>
            <person name="Dong W."/>
            <person name="Hu S."/>
            <person name="Zeng C."/>
            <person name="Zhang J."/>
            <person name="Zhang Y."/>
            <person name="Li R."/>
            <person name="Xu Z."/>
            <person name="Li S."/>
            <person name="Li X."/>
            <person name="Zheng H."/>
            <person name="Cong L."/>
            <person name="Lin L."/>
            <person name="Yin J."/>
            <person name="Geng J."/>
            <person name="Li G."/>
            <person name="Shi J."/>
            <person name="Liu J."/>
            <person name="Lv H."/>
            <person name="Li J."/>
            <person name="Wang J."/>
            <person name="Deng Y."/>
            <person name="Ran L."/>
            <person name="Shi X."/>
            <person name="Wang X."/>
            <person name="Wu Q."/>
            <person name="Li C."/>
            <person name="Ren X."/>
            <person name="Wang J."/>
            <person name="Wang X."/>
            <person name="Li D."/>
            <person name="Liu D."/>
            <person name="Zhang X."/>
            <person name="Ji Z."/>
            <person name="Zhao W."/>
            <person name="Sun Y."/>
            <person name="Zhang Z."/>
            <person name="Bao J."/>
            <person name="Han Y."/>
            <person name="Dong L."/>
            <person name="Ji J."/>
            <person name="Chen P."/>
            <person name="Wu S."/>
            <person name="Liu J."/>
            <person name="Xiao Y."/>
            <person name="Bu D."/>
            <person name="Tan J."/>
            <person name="Yang L."/>
            <person name="Ye C."/>
            <person name="Zhang J."/>
            <person name="Xu J."/>
            <person name="Zhou Y."/>
            <person name="Yu Y."/>
            <person name="Zhang B."/>
            <person name="Zhuang S."/>
            <person name="Wei H."/>
            <person name="Liu B."/>
            <person name="Lei M."/>
            <person name="Yu H."/>
            <person name="Li Y."/>
            <person name="Xu H."/>
            <person name="Wei S."/>
            <person name="He X."/>
            <person name="Fang L."/>
            <person name="Zhang Z."/>
            <person name="Zhang Y."/>
            <person name="Huang X."/>
            <person name="Su Z."/>
            <person name="Tong W."/>
            <person name="Li J."/>
            <person name="Tong Z."/>
            <person name="Li S."/>
            <person name="Ye J."/>
            <person name="Wang L."/>
            <person name="Fang L."/>
            <person name="Lei T."/>
            <person name="Chen C.-S."/>
            <person name="Chen H.-C."/>
            <person name="Xu Z."/>
            <person name="Li H."/>
            <person name="Huang H."/>
            <person name="Zhang F."/>
            <person name="Xu H."/>
            <person name="Li N."/>
            <person name="Zhao C."/>
            <person name="Li S."/>
            <person name="Dong L."/>
            <person name="Huang Y."/>
            <person name="Li L."/>
            <person name="Xi Y."/>
            <person name="Qi Q."/>
            <person name="Li W."/>
            <person name="Zhang B."/>
            <person name="Hu W."/>
            <person name="Zhang Y."/>
            <person name="Tian X."/>
            <person name="Jiao Y."/>
            <person name="Liang X."/>
            <person name="Jin J."/>
            <person name="Gao L."/>
            <person name="Zheng W."/>
            <person name="Hao B."/>
            <person name="Liu S.-M."/>
            <person name="Wang W."/>
            <person name="Yuan L."/>
            <person name="Cao M."/>
            <person name="McDermott J."/>
            <person name="Samudrala R."/>
            <person name="Wang J."/>
            <person name="Wong G.K.-S."/>
            <person name="Yang H."/>
        </authorList>
    </citation>
    <scope>NUCLEOTIDE SEQUENCE [LARGE SCALE GENOMIC DNA]</scope>
    <source>
        <strain>cv. 93-11</strain>
    </source>
</reference>
<protein>
    <recommendedName>
        <fullName evidence="1">tRNA (guanine-N(7)-)-methyltransferase</fullName>
        <ecNumber evidence="1">2.1.1.33</ecNumber>
    </recommendedName>
    <alternativeName>
        <fullName evidence="1">tRNA (guanine(46)-N(7))-methyltransferase</fullName>
    </alternativeName>
    <alternativeName>
        <fullName evidence="1">tRNA(m7G46)-methyltransferase</fullName>
    </alternativeName>
</protein>
<organism>
    <name type="scientific">Oryza sativa subsp. indica</name>
    <name type="common">Rice</name>
    <dbReference type="NCBI Taxonomy" id="39946"/>
    <lineage>
        <taxon>Eukaryota</taxon>
        <taxon>Viridiplantae</taxon>
        <taxon>Streptophyta</taxon>
        <taxon>Embryophyta</taxon>
        <taxon>Tracheophyta</taxon>
        <taxon>Spermatophyta</taxon>
        <taxon>Magnoliopsida</taxon>
        <taxon>Liliopsida</taxon>
        <taxon>Poales</taxon>
        <taxon>Poaceae</taxon>
        <taxon>BOP clade</taxon>
        <taxon>Oryzoideae</taxon>
        <taxon>Oryzeae</taxon>
        <taxon>Oryzinae</taxon>
        <taxon>Oryza</taxon>
        <taxon>Oryza sativa</taxon>
    </lineage>
</organism>
<gene>
    <name type="ORF">OsI_22311</name>
</gene>
<accession>A2YB34</accession>
<keyword id="KW-0489">Methyltransferase</keyword>
<keyword id="KW-0539">Nucleus</keyword>
<keyword id="KW-1185">Reference proteome</keyword>
<keyword id="KW-0694">RNA-binding</keyword>
<keyword id="KW-0949">S-adenosyl-L-methionine</keyword>
<keyword id="KW-0808">Transferase</keyword>
<keyword id="KW-0819">tRNA processing</keyword>
<keyword id="KW-0820">tRNA-binding</keyword>
<comment type="function">
    <text evidence="1">Catalyzes the formation of N(7)-methylguanine at position 46 (m7G46) in tRNA.</text>
</comment>
<comment type="catalytic activity">
    <reaction evidence="1">
        <text>guanosine(46) in tRNA + S-adenosyl-L-methionine = N(7)-methylguanosine(46) in tRNA + S-adenosyl-L-homocysteine</text>
        <dbReference type="Rhea" id="RHEA:42708"/>
        <dbReference type="Rhea" id="RHEA-COMP:10188"/>
        <dbReference type="Rhea" id="RHEA-COMP:10189"/>
        <dbReference type="ChEBI" id="CHEBI:57856"/>
        <dbReference type="ChEBI" id="CHEBI:59789"/>
        <dbReference type="ChEBI" id="CHEBI:74269"/>
        <dbReference type="ChEBI" id="CHEBI:74480"/>
        <dbReference type="EC" id="2.1.1.33"/>
    </reaction>
</comment>
<comment type="pathway">
    <text evidence="1">tRNA modification; N(7)-methylguanine-tRNA biosynthesis.</text>
</comment>
<comment type="subcellular location">
    <subcellularLocation>
        <location evidence="1">Nucleus</location>
    </subcellularLocation>
</comment>
<comment type="similarity">
    <text evidence="1">Belongs to the class I-like SAM-binding methyltransferase superfamily. TrmB family.</text>
</comment>
<dbReference type="EC" id="2.1.1.33" evidence="1"/>
<dbReference type="EMBL" id="CM000131">
    <property type="protein sequence ID" value="EAZ00295.1"/>
    <property type="molecule type" value="Genomic_DNA"/>
</dbReference>
<dbReference type="SMR" id="A2YB34"/>
<dbReference type="STRING" id="39946.A2YB34"/>
<dbReference type="EnsemblPlants" id="BGIOSGA022602-TA">
    <property type="protein sequence ID" value="BGIOSGA022602-PA"/>
    <property type="gene ID" value="BGIOSGA022602"/>
</dbReference>
<dbReference type="EnsemblPlants" id="OsGoSa_06g0009100.01">
    <property type="protein sequence ID" value="OsGoSa_06g0009100.01"/>
    <property type="gene ID" value="OsGoSa_06g0009100"/>
</dbReference>
<dbReference type="EnsemblPlants" id="OsIR64_06g0008780.01">
    <property type="protein sequence ID" value="OsIR64_06g0008780.01"/>
    <property type="gene ID" value="OsIR64_06g0008780"/>
</dbReference>
<dbReference type="EnsemblPlants" id="OsKYG_06g0009070.01">
    <property type="protein sequence ID" value="OsKYG_06g0009070.01"/>
    <property type="gene ID" value="OsKYG_06g0009070"/>
</dbReference>
<dbReference type="EnsemblPlants" id="OsKYG_06g0009070.02">
    <property type="protein sequence ID" value="OsKYG_06g0009070.02"/>
    <property type="gene ID" value="OsKYG_06g0009070"/>
</dbReference>
<dbReference type="EnsemblPlants" id="OsLaMu_06g0009000.01">
    <property type="protein sequence ID" value="OsLaMu_06g0009000.01"/>
    <property type="gene ID" value="OsLaMu_06g0009000"/>
</dbReference>
<dbReference type="EnsemblPlants" id="OsLima_06g0009250.01">
    <property type="protein sequence ID" value="OsLima_06g0009250.01"/>
    <property type="gene ID" value="OsLima_06g0009250"/>
</dbReference>
<dbReference type="EnsemblPlants" id="OsPr106_06g0009200.01">
    <property type="protein sequence ID" value="OsPr106_06g0009200.01"/>
    <property type="gene ID" value="OsPr106_06g0009200"/>
</dbReference>
<dbReference type="EnsemblPlants" id="OsZS97_06G009070_01">
    <property type="protein sequence ID" value="OsZS97_06G009070_01"/>
    <property type="gene ID" value="OsZS97_06G009070"/>
</dbReference>
<dbReference type="EnsemblPlants" id="OsZS97_06G009070_02">
    <property type="protein sequence ID" value="OsZS97_06G009070_02"/>
    <property type="gene ID" value="OsZS97_06G009070"/>
</dbReference>
<dbReference type="Gramene" id="BGIOSGA022602-TA">
    <property type="protein sequence ID" value="BGIOSGA022602-PA"/>
    <property type="gene ID" value="BGIOSGA022602"/>
</dbReference>
<dbReference type="Gramene" id="OsGoSa_06g0009100.01">
    <property type="protein sequence ID" value="OsGoSa_06g0009100.01"/>
    <property type="gene ID" value="OsGoSa_06g0009100"/>
</dbReference>
<dbReference type="Gramene" id="OsIR64_06g0008780.01">
    <property type="protein sequence ID" value="OsIR64_06g0008780.01"/>
    <property type="gene ID" value="OsIR64_06g0008780"/>
</dbReference>
<dbReference type="Gramene" id="OsKYG_06g0009070.01">
    <property type="protein sequence ID" value="OsKYG_06g0009070.01"/>
    <property type="gene ID" value="OsKYG_06g0009070"/>
</dbReference>
<dbReference type="Gramene" id="OsKYG_06g0009070.02">
    <property type="protein sequence ID" value="OsKYG_06g0009070.02"/>
    <property type="gene ID" value="OsKYG_06g0009070"/>
</dbReference>
<dbReference type="Gramene" id="OsLaMu_06g0009000.01">
    <property type="protein sequence ID" value="OsLaMu_06g0009000.01"/>
    <property type="gene ID" value="OsLaMu_06g0009000"/>
</dbReference>
<dbReference type="Gramene" id="OsLima_06g0009250.01">
    <property type="protein sequence ID" value="OsLima_06g0009250.01"/>
    <property type="gene ID" value="OsLima_06g0009250"/>
</dbReference>
<dbReference type="Gramene" id="OsPr106_06g0009200.01">
    <property type="protein sequence ID" value="OsPr106_06g0009200.01"/>
    <property type="gene ID" value="OsPr106_06g0009200"/>
</dbReference>
<dbReference type="Gramene" id="OsZS97_06G009070_01">
    <property type="protein sequence ID" value="OsZS97_06G009070_01"/>
    <property type="gene ID" value="OsZS97_06G009070"/>
</dbReference>
<dbReference type="Gramene" id="OsZS97_06G009070_02">
    <property type="protein sequence ID" value="OsZS97_06G009070_02"/>
    <property type="gene ID" value="OsZS97_06G009070"/>
</dbReference>
<dbReference type="HOGENOM" id="CLU_050910_3_0_1"/>
<dbReference type="OMA" id="LPNYFAK"/>
<dbReference type="OrthoDB" id="47276at2759"/>
<dbReference type="UniPathway" id="UPA00989"/>
<dbReference type="Proteomes" id="UP000007015">
    <property type="component" value="Chromosome 6"/>
</dbReference>
<dbReference type="GO" id="GO:0005634">
    <property type="term" value="C:nucleus"/>
    <property type="evidence" value="ECO:0007669"/>
    <property type="project" value="UniProtKB-SubCell"/>
</dbReference>
<dbReference type="GO" id="GO:0043527">
    <property type="term" value="C:tRNA methyltransferase complex"/>
    <property type="evidence" value="ECO:0007669"/>
    <property type="project" value="TreeGrafter"/>
</dbReference>
<dbReference type="GO" id="GO:0008176">
    <property type="term" value="F:tRNA (guanine(46)-N7)-methyltransferase activity"/>
    <property type="evidence" value="ECO:0007669"/>
    <property type="project" value="UniProtKB-UniRule"/>
</dbReference>
<dbReference type="GO" id="GO:0000049">
    <property type="term" value="F:tRNA binding"/>
    <property type="evidence" value="ECO:0007669"/>
    <property type="project" value="UniProtKB-UniRule"/>
</dbReference>
<dbReference type="CDD" id="cd02440">
    <property type="entry name" value="AdoMet_MTases"/>
    <property type="match status" value="1"/>
</dbReference>
<dbReference type="FunFam" id="3.40.50.150:FF:000158">
    <property type="entry name" value="tRNA (guanine-N(7)-)-methyltransferase"/>
    <property type="match status" value="1"/>
</dbReference>
<dbReference type="Gene3D" id="3.40.50.150">
    <property type="entry name" value="Vaccinia Virus protein VP39"/>
    <property type="match status" value="1"/>
</dbReference>
<dbReference type="HAMAP" id="MF_03055">
    <property type="entry name" value="tRNA_methyltr_TrmB_euk"/>
    <property type="match status" value="1"/>
</dbReference>
<dbReference type="InterPro" id="IPR029063">
    <property type="entry name" value="SAM-dependent_MTases_sf"/>
</dbReference>
<dbReference type="InterPro" id="IPR025763">
    <property type="entry name" value="Trm8_euk"/>
</dbReference>
<dbReference type="InterPro" id="IPR003358">
    <property type="entry name" value="tRNA_(Gua-N-7)_MeTrfase_Trmb"/>
</dbReference>
<dbReference type="NCBIfam" id="TIGR00091">
    <property type="entry name" value="tRNA (guanosine(46)-N7)-methyltransferase TrmB"/>
    <property type="match status" value="1"/>
</dbReference>
<dbReference type="PANTHER" id="PTHR23417">
    <property type="entry name" value="3-DEOXY-D-MANNO-OCTULOSONIC-ACID TRANSFERASE/TRNA GUANINE-N 7 - -METHYLTRANSFERASE"/>
    <property type="match status" value="1"/>
</dbReference>
<dbReference type="PANTHER" id="PTHR23417:SF16">
    <property type="entry name" value="TRNA (GUANINE-N(7)-)-METHYLTRANSFERASE"/>
    <property type="match status" value="1"/>
</dbReference>
<dbReference type="Pfam" id="PF02390">
    <property type="entry name" value="Methyltransf_4"/>
    <property type="match status" value="1"/>
</dbReference>
<dbReference type="SUPFAM" id="SSF53335">
    <property type="entry name" value="S-adenosyl-L-methionine-dependent methyltransferases"/>
    <property type="match status" value="1"/>
</dbReference>
<dbReference type="PROSITE" id="PS51625">
    <property type="entry name" value="SAM_MT_TRMB"/>
    <property type="match status" value="1"/>
</dbReference>
<sequence length="259" mass="29078">MASGDGANGGGGGGQGKLPRKRFYRARAHSNPLSDSHFPIPISPDEVDLSQHYPRYFPSGEGEARQGDAAVPRIRFADVGCGFGGLLVGLSTLFPDTLMIGMELRDKVTEYVKERILALRASNPGKYDNISVVRTNSMKYIPNYFRKAQLSKMFFLFPDPHFKEKNHRRRVISMQLLDEYAYVMEVGGIIYTITDVEELGEWMRSCLEKHPLFEAIPEEETKADPVVKLLSTATEEGQKVARNGGQTFQAIFRRISLQE</sequence>
<proteinExistence type="inferred from homology"/>
<name>TRMB_ORYSI</name>
<feature type="chain" id="PRO_0000370581" description="tRNA (guanine-N(7)-)-methyltransferase">
    <location>
        <begin position="1"/>
        <end position="259"/>
    </location>
</feature>
<feature type="active site" evidence="1">
    <location>
        <position position="159"/>
    </location>
</feature>
<feature type="binding site" evidence="1">
    <location>
        <position position="80"/>
    </location>
    <ligand>
        <name>S-adenosyl-L-methionine</name>
        <dbReference type="ChEBI" id="CHEBI:59789"/>
    </ligand>
</feature>
<feature type="binding site" evidence="1">
    <location>
        <begin position="103"/>
        <end position="104"/>
    </location>
    <ligand>
        <name>S-adenosyl-L-methionine</name>
        <dbReference type="ChEBI" id="CHEBI:59789"/>
    </ligand>
</feature>
<feature type="binding site" evidence="1">
    <location>
        <begin position="136"/>
        <end position="137"/>
    </location>
    <ligand>
        <name>S-adenosyl-L-methionine</name>
        <dbReference type="ChEBI" id="CHEBI:59789"/>
    </ligand>
</feature>
<feature type="binding site" evidence="1">
    <location>
        <position position="156"/>
    </location>
    <ligand>
        <name>S-adenosyl-L-methionine</name>
        <dbReference type="ChEBI" id="CHEBI:59789"/>
    </ligand>
</feature>
<feature type="binding site" evidence="1">
    <location>
        <begin position="234"/>
        <end position="236"/>
    </location>
    <ligand>
        <name>S-adenosyl-L-methionine</name>
        <dbReference type="ChEBI" id="CHEBI:59789"/>
    </ligand>
</feature>
<evidence type="ECO:0000255" key="1">
    <source>
        <dbReference type="HAMAP-Rule" id="MF_03055"/>
    </source>
</evidence>